<evidence type="ECO:0000250" key="1">
    <source>
        <dbReference type="UniProtKB" id="O00764"/>
    </source>
</evidence>
<evidence type="ECO:0000250" key="2">
    <source>
        <dbReference type="UniProtKB" id="P82197"/>
    </source>
</evidence>
<evidence type="ECO:0000305" key="3"/>
<gene>
    <name type="primary">Pdxk</name>
    <name type="synonym">Pkh</name>
</gene>
<protein>
    <recommendedName>
        <fullName>Pyridoxal kinase</fullName>
        <ecNumber evidence="1">2.7.1.35</ecNumber>
    </recommendedName>
    <alternativeName>
        <fullName>Pyridoxine kinase</fullName>
    </alternativeName>
</protein>
<keyword id="KW-0007">Acetylation</keyword>
<keyword id="KW-0067">ATP-binding</keyword>
<keyword id="KW-0963">Cytoplasm</keyword>
<keyword id="KW-0903">Direct protein sequencing</keyword>
<keyword id="KW-0418">Kinase</keyword>
<keyword id="KW-0460">Magnesium</keyword>
<keyword id="KW-0479">Metal-binding</keyword>
<keyword id="KW-0547">Nucleotide-binding</keyword>
<keyword id="KW-0597">Phosphoprotein</keyword>
<keyword id="KW-1185">Reference proteome</keyword>
<keyword id="KW-0915">Sodium</keyword>
<keyword id="KW-0808">Transferase</keyword>
<keyword id="KW-0862">Zinc</keyword>
<organism>
    <name type="scientific">Rattus norvegicus</name>
    <name type="common">Rat</name>
    <dbReference type="NCBI Taxonomy" id="10116"/>
    <lineage>
        <taxon>Eukaryota</taxon>
        <taxon>Metazoa</taxon>
        <taxon>Chordata</taxon>
        <taxon>Craniata</taxon>
        <taxon>Vertebrata</taxon>
        <taxon>Euteleostomi</taxon>
        <taxon>Mammalia</taxon>
        <taxon>Eutheria</taxon>
        <taxon>Euarchontoglires</taxon>
        <taxon>Glires</taxon>
        <taxon>Rodentia</taxon>
        <taxon>Myomorpha</taxon>
        <taxon>Muroidea</taxon>
        <taxon>Muridae</taxon>
        <taxon>Murinae</taxon>
        <taxon>Rattus</taxon>
    </lineage>
</organism>
<dbReference type="EC" id="2.7.1.35" evidence="1"/>
<dbReference type="EMBL" id="AF020346">
    <property type="protein sequence ID" value="AAB71400.1"/>
    <property type="molecule type" value="mRNA"/>
</dbReference>
<dbReference type="RefSeq" id="NP_113957.1">
    <property type="nucleotide sequence ID" value="NM_031769.1"/>
</dbReference>
<dbReference type="SMR" id="O35331"/>
<dbReference type="FunCoup" id="O35331">
    <property type="interactions" value="1829"/>
</dbReference>
<dbReference type="STRING" id="10116.ENSRNOP00000001589"/>
<dbReference type="iPTMnet" id="O35331"/>
<dbReference type="PhosphoSitePlus" id="O35331"/>
<dbReference type="jPOST" id="O35331"/>
<dbReference type="PaxDb" id="10116-ENSRNOP00000001589"/>
<dbReference type="GeneID" id="83578"/>
<dbReference type="KEGG" id="rno:83578"/>
<dbReference type="UCSC" id="RGD:621324">
    <property type="organism name" value="rat"/>
</dbReference>
<dbReference type="AGR" id="RGD:621324"/>
<dbReference type="CTD" id="8566"/>
<dbReference type="RGD" id="621324">
    <property type="gene designation" value="Pdxk"/>
</dbReference>
<dbReference type="eggNOG" id="KOG2599">
    <property type="taxonomic scope" value="Eukaryota"/>
</dbReference>
<dbReference type="InParanoid" id="O35331"/>
<dbReference type="PhylomeDB" id="O35331"/>
<dbReference type="BRENDA" id="2.7.1.35">
    <property type="organism ID" value="5301"/>
</dbReference>
<dbReference type="Reactome" id="R-RNO-6798695">
    <property type="pathway name" value="Neutrophil degranulation"/>
</dbReference>
<dbReference type="Reactome" id="R-RNO-964975">
    <property type="pathway name" value="Vitamin B6 activation to pyridoxal phosphate"/>
</dbReference>
<dbReference type="UniPathway" id="UPA01068">
    <property type="reaction ID" value="UER00298"/>
</dbReference>
<dbReference type="UniPathway" id="UPA01068">
    <property type="reaction ID" value="UER00299"/>
</dbReference>
<dbReference type="UniPathway" id="UPA01068">
    <property type="reaction ID" value="UER00300"/>
</dbReference>
<dbReference type="PRO" id="PR:O35331"/>
<dbReference type="Proteomes" id="UP000002494">
    <property type="component" value="Unplaced"/>
</dbReference>
<dbReference type="GO" id="GO:0005829">
    <property type="term" value="C:cytosol"/>
    <property type="evidence" value="ECO:0000266"/>
    <property type="project" value="RGD"/>
</dbReference>
<dbReference type="GO" id="GO:0005524">
    <property type="term" value="F:ATP binding"/>
    <property type="evidence" value="ECO:0007669"/>
    <property type="project" value="UniProtKB-KW"/>
</dbReference>
<dbReference type="GO" id="GO:0046872">
    <property type="term" value="F:metal ion binding"/>
    <property type="evidence" value="ECO:0007669"/>
    <property type="project" value="UniProtKB-KW"/>
</dbReference>
<dbReference type="GO" id="GO:0016773">
    <property type="term" value="F:phosphotransferase activity, alcohol group as acceptor"/>
    <property type="evidence" value="ECO:0000266"/>
    <property type="project" value="RGD"/>
</dbReference>
<dbReference type="GO" id="GO:0070280">
    <property type="term" value="F:pyridoxal binding"/>
    <property type="evidence" value="ECO:0000314"/>
    <property type="project" value="RGD"/>
</dbReference>
<dbReference type="GO" id="GO:0008478">
    <property type="term" value="F:pyridoxal kinase activity"/>
    <property type="evidence" value="ECO:0000314"/>
    <property type="project" value="RGD"/>
</dbReference>
<dbReference type="GO" id="GO:0043066">
    <property type="term" value="P:negative regulation of apoptotic process"/>
    <property type="evidence" value="ECO:0000315"/>
    <property type="project" value="RGD"/>
</dbReference>
<dbReference type="GO" id="GO:0009443">
    <property type="term" value="P:pyridoxal 5'-phosphate salvage"/>
    <property type="evidence" value="ECO:0000318"/>
    <property type="project" value="GO_Central"/>
</dbReference>
<dbReference type="GO" id="GO:0042817">
    <property type="term" value="P:pyridoxal metabolic process"/>
    <property type="evidence" value="ECO:0000266"/>
    <property type="project" value="RGD"/>
</dbReference>
<dbReference type="GO" id="GO:0042823">
    <property type="term" value="P:pyridoxal phosphate biosynthetic process"/>
    <property type="evidence" value="ECO:0000314"/>
    <property type="project" value="RGD"/>
</dbReference>
<dbReference type="GO" id="GO:0042822">
    <property type="term" value="P:pyridoxal phosphate metabolic process"/>
    <property type="evidence" value="ECO:0000266"/>
    <property type="project" value="RGD"/>
</dbReference>
<dbReference type="GO" id="GO:0042818">
    <property type="term" value="P:pyridoxamine metabolic process"/>
    <property type="evidence" value="ECO:0000266"/>
    <property type="project" value="RGD"/>
</dbReference>
<dbReference type="GO" id="GO:0014075">
    <property type="term" value="P:response to amine"/>
    <property type="evidence" value="ECO:0000270"/>
    <property type="project" value="RGD"/>
</dbReference>
<dbReference type="GO" id="GO:0032094">
    <property type="term" value="P:response to food"/>
    <property type="evidence" value="ECO:0000270"/>
    <property type="project" value="RGD"/>
</dbReference>
<dbReference type="GO" id="GO:0017085">
    <property type="term" value="P:response to insecticide"/>
    <property type="evidence" value="ECO:0000270"/>
    <property type="project" value="RGD"/>
</dbReference>
<dbReference type="GO" id="GO:0032570">
    <property type="term" value="P:response to progesterone"/>
    <property type="evidence" value="ECO:0000270"/>
    <property type="project" value="RGD"/>
</dbReference>
<dbReference type="GO" id="GO:0009636">
    <property type="term" value="P:response to toxic substance"/>
    <property type="evidence" value="ECO:0000270"/>
    <property type="project" value="RGD"/>
</dbReference>
<dbReference type="GO" id="GO:0010165">
    <property type="term" value="P:response to X-ray"/>
    <property type="evidence" value="ECO:0000270"/>
    <property type="project" value="RGD"/>
</dbReference>
<dbReference type="GO" id="GO:0009410">
    <property type="term" value="P:response to xenobiotic stimulus"/>
    <property type="evidence" value="ECO:0000270"/>
    <property type="project" value="RGD"/>
</dbReference>
<dbReference type="CDD" id="cd01173">
    <property type="entry name" value="pyridoxal_pyridoxamine_kinase"/>
    <property type="match status" value="1"/>
</dbReference>
<dbReference type="FunFam" id="3.40.1190.20:FF:000007">
    <property type="entry name" value="Pyridoxal kinase"/>
    <property type="match status" value="1"/>
</dbReference>
<dbReference type="Gene3D" id="3.40.1190.20">
    <property type="match status" value="1"/>
</dbReference>
<dbReference type="InterPro" id="IPR013749">
    <property type="entry name" value="PM/HMP-P_kinase-1"/>
</dbReference>
<dbReference type="InterPro" id="IPR004625">
    <property type="entry name" value="PyrdxlKinase"/>
</dbReference>
<dbReference type="InterPro" id="IPR029056">
    <property type="entry name" value="Ribokinase-like"/>
</dbReference>
<dbReference type="NCBIfam" id="TIGR00687">
    <property type="entry name" value="pyridox_kin"/>
    <property type="match status" value="1"/>
</dbReference>
<dbReference type="PANTHER" id="PTHR10534">
    <property type="entry name" value="PYRIDOXAL KINASE"/>
    <property type="match status" value="1"/>
</dbReference>
<dbReference type="PANTHER" id="PTHR10534:SF2">
    <property type="entry name" value="PYRIDOXAL KINASE"/>
    <property type="match status" value="1"/>
</dbReference>
<dbReference type="Pfam" id="PF08543">
    <property type="entry name" value="Phos_pyr_kin"/>
    <property type="match status" value="1"/>
</dbReference>
<dbReference type="SUPFAM" id="SSF53613">
    <property type="entry name" value="Ribokinase-like"/>
    <property type="match status" value="1"/>
</dbReference>
<proteinExistence type="evidence at protein level"/>
<reference key="1">
    <citation type="submission" date="1997-08" db="EMBL/GenBank/DDBJ databases">
        <authorList>
            <person name="Wu Y."/>
            <person name="Ngo E."/>
            <person name="Nutter L.M."/>
        </authorList>
    </citation>
    <scope>NUCLEOTIDE SEQUENCE [MRNA]</scope>
    <source>
        <strain>Sprague-Dawley</strain>
        <tissue>Liver</tissue>
    </source>
</reference>
<reference key="2">
    <citation type="submission" date="2007-04" db="UniProtKB">
        <authorList>
            <person name="Lubec G."/>
            <person name="Afjehi-Sadat L."/>
            <person name="Chen W.-Q."/>
        </authorList>
    </citation>
    <scope>PROTEIN SEQUENCE OF 77-102; 161-177 AND 276-292</scope>
    <scope>IDENTIFICATION BY MASS SPECTROMETRY</scope>
    <source>
        <strain>Sprague-Dawley</strain>
        <tissue>Hippocampus</tissue>
        <tissue>Spinal cord</tissue>
    </source>
</reference>
<accession>O35331</accession>
<feature type="chain" id="PRO_0000213338" description="Pyridoxal kinase">
    <location>
        <begin position="1"/>
        <end position="312"/>
    </location>
</feature>
<feature type="active site" description="Proton acceptor" evidence="1">
    <location>
        <position position="235"/>
    </location>
</feature>
<feature type="binding site" evidence="1">
    <location>
        <position position="12"/>
    </location>
    <ligand>
        <name>pyridoxal</name>
        <dbReference type="ChEBI" id="CHEBI:17310"/>
    </ligand>
</feature>
<feature type="binding site" evidence="1">
    <location>
        <position position="47"/>
    </location>
    <ligand>
        <name>pyridoxal</name>
        <dbReference type="ChEBI" id="CHEBI:17310"/>
    </ligand>
</feature>
<feature type="binding site" evidence="1">
    <location>
        <position position="47"/>
    </location>
    <ligand>
        <name>pyridoxal 5'-phosphate</name>
        <dbReference type="ChEBI" id="CHEBI:597326"/>
    </ligand>
</feature>
<feature type="binding site" evidence="1">
    <location>
        <position position="113"/>
    </location>
    <ligand>
        <name>ATP</name>
        <dbReference type="ChEBI" id="CHEBI:30616"/>
    </ligand>
</feature>
<feature type="binding site" evidence="1">
    <location>
        <position position="113"/>
    </location>
    <ligand>
        <name>Na(+)</name>
        <dbReference type="ChEBI" id="CHEBI:29101"/>
    </ligand>
</feature>
<feature type="binding site" evidence="1">
    <location>
        <position position="118"/>
    </location>
    <ligand>
        <name>Mg(2+)</name>
        <dbReference type="ChEBI" id="CHEBI:18420"/>
    </ligand>
</feature>
<feature type="binding site" evidence="1">
    <location>
        <position position="148"/>
    </location>
    <ligand>
        <name>Na(+)</name>
        <dbReference type="ChEBI" id="CHEBI:29101"/>
    </ligand>
</feature>
<feature type="binding site" evidence="1">
    <location>
        <begin position="150"/>
        <end position="153"/>
    </location>
    <ligand>
        <name>ATP</name>
        <dbReference type="ChEBI" id="CHEBI:30616"/>
    </ligand>
</feature>
<feature type="binding site" evidence="1">
    <location>
        <begin position="186"/>
        <end position="187"/>
    </location>
    <ligand>
        <name>ATP</name>
        <dbReference type="ChEBI" id="CHEBI:30616"/>
    </ligand>
</feature>
<feature type="binding site" evidence="1">
    <location>
        <position position="186"/>
    </location>
    <ligand>
        <name>Na(+)</name>
        <dbReference type="ChEBI" id="CHEBI:29101"/>
    </ligand>
</feature>
<feature type="binding site" evidence="1">
    <location>
        <begin position="226"/>
        <end position="228"/>
    </location>
    <ligand>
        <name>ATP</name>
        <dbReference type="ChEBI" id="CHEBI:30616"/>
    </ligand>
</feature>
<feature type="binding site" evidence="1">
    <location>
        <position position="233"/>
    </location>
    <ligand>
        <name>ATP</name>
        <dbReference type="ChEBI" id="CHEBI:30616"/>
    </ligand>
</feature>
<feature type="binding site" evidence="1">
    <location>
        <begin position="234"/>
        <end position="235"/>
    </location>
    <ligand>
        <name>pyridoxal 5'-phosphate</name>
        <dbReference type="ChEBI" id="CHEBI:597326"/>
    </ligand>
</feature>
<feature type="modified residue" description="N-acetylmethionine" evidence="2">
    <location>
        <position position="1"/>
    </location>
</feature>
<feature type="modified residue" description="Phosphoserine" evidence="1">
    <location>
        <position position="59"/>
    </location>
</feature>
<feature type="modified residue" description="Phosphoserine" evidence="1">
    <location>
        <position position="164"/>
    </location>
</feature>
<feature type="modified residue" description="Phosphoserine" evidence="1">
    <location>
        <position position="213"/>
    </location>
</feature>
<feature type="modified residue" description="Phosphoserine" evidence="1">
    <location>
        <position position="285"/>
    </location>
</feature>
<comment type="function">
    <text evidence="1">Catalyzes the phosphorylation of the dietary vitamin B6 vitamers pyridoxal (PL), pyridoxine (PN) and pyridoxamine (PM) to form pyridoxal 5'-phosphate (PLP), pyridoxine 5'-phosphate (PNP) and pyridoxamine 5'-phosphate (PMP), respectively (By similarity). PLP is the active form of vitamin B6, and acts as a cofactor for over 140 different enzymatic reactions (By similarity).</text>
</comment>
<comment type="catalytic activity">
    <reaction evidence="1">
        <text>pyridoxal + ATP = pyridoxal 5'-phosphate + ADP + H(+)</text>
        <dbReference type="Rhea" id="RHEA:10224"/>
        <dbReference type="ChEBI" id="CHEBI:15378"/>
        <dbReference type="ChEBI" id="CHEBI:17310"/>
        <dbReference type="ChEBI" id="CHEBI:30616"/>
        <dbReference type="ChEBI" id="CHEBI:456216"/>
        <dbReference type="ChEBI" id="CHEBI:597326"/>
        <dbReference type="EC" id="2.7.1.35"/>
    </reaction>
    <physiologicalReaction direction="left-to-right" evidence="1">
        <dbReference type="Rhea" id="RHEA:10225"/>
    </physiologicalReaction>
</comment>
<comment type="catalytic activity">
    <reaction evidence="1">
        <text>pyridoxamine + ATP = pyridoxamine 5'-phosphate + ADP + H(+)</text>
        <dbReference type="Rhea" id="RHEA:25104"/>
        <dbReference type="ChEBI" id="CHEBI:15378"/>
        <dbReference type="ChEBI" id="CHEBI:30616"/>
        <dbReference type="ChEBI" id="CHEBI:57761"/>
        <dbReference type="ChEBI" id="CHEBI:58451"/>
        <dbReference type="ChEBI" id="CHEBI:456216"/>
        <dbReference type="EC" id="2.7.1.35"/>
    </reaction>
    <physiologicalReaction direction="left-to-right" evidence="1">
        <dbReference type="Rhea" id="RHEA:25105"/>
    </physiologicalReaction>
</comment>
<comment type="catalytic activity">
    <reaction evidence="1">
        <text>pyridoxine + ATP = pyridoxine 5'-phosphate + ADP + H(+)</text>
        <dbReference type="Rhea" id="RHEA:25108"/>
        <dbReference type="ChEBI" id="CHEBI:15378"/>
        <dbReference type="ChEBI" id="CHEBI:16709"/>
        <dbReference type="ChEBI" id="CHEBI:30616"/>
        <dbReference type="ChEBI" id="CHEBI:58589"/>
        <dbReference type="ChEBI" id="CHEBI:456216"/>
        <dbReference type="EC" id="2.7.1.35"/>
    </reaction>
    <physiologicalReaction direction="left-to-right" evidence="1">
        <dbReference type="Rhea" id="RHEA:25109"/>
    </physiologicalReaction>
</comment>
<comment type="cofactor">
    <cofactor evidence="2">
        <name>Zn(2+)</name>
        <dbReference type="ChEBI" id="CHEBI:29105"/>
    </cofactor>
    <cofactor evidence="1">
        <name>Mg(2+)</name>
        <dbReference type="ChEBI" id="CHEBI:18420"/>
    </cofactor>
</comment>
<comment type="activity regulation">
    <text evidence="1">Activity is increased in the presence of K(+)or Na(+).</text>
</comment>
<comment type="pathway">
    <text evidence="1">Cofactor metabolism; pyridoxal 5'-phosphate salvage; pyridoxal 5'-phosphate from pyridoxal: step 1/1.</text>
</comment>
<comment type="pathway">
    <text evidence="1">Cofactor metabolism; pyridoxal 5'-phosphate salvage; pyridoxine 5'-phosphate from pyridoxine: step 1/1.</text>
</comment>
<comment type="pathway">
    <text evidence="1">Cofactor metabolism; pyridoxal 5'-phosphate salvage; pyridoxamine 5'-phosphate from pyridoxamine: step 1/1.</text>
</comment>
<comment type="subunit">
    <text evidence="1">Homodimer.</text>
</comment>
<comment type="subcellular location">
    <subcellularLocation>
        <location evidence="1">Cytoplasm</location>
        <location evidence="1">Cytosol</location>
    </subcellularLocation>
</comment>
<comment type="similarity">
    <text evidence="3">Belongs to the pyridoxine kinase family.</text>
</comment>
<name>PDXK_RAT</name>
<sequence>MEGECRVLSIQSHVVRGYVGNRAAMFPLQVLGFEVDAVNSVQFSNHTGYAHWKGQVLTSQELHALYEGLKANNVNKYDYVLTGYTRDKSFLGMVVDIVQELKQQNSRLVYVCDPVMGDKWNGEGSMYVPQDLLPVYREKVVPMADIITPNQFEAELLSGRKIHSQEEAFAVMDVLHRMGPDTVVITSSDLPSPKGSDYLMALGSQRMRKPDGSTVTQRIRMEMRKVDPVFVGTGDLFAAMLLAWTHKHPDNLKVACEKTVSAMQHVLQRTIRCAKAEAGEGQKPSPAQLELRMVQSRKDIEDPEIVVQATVL</sequence>